<protein>
    <recommendedName>
        <fullName evidence="1">Ribosomal RNA large subunit methyltransferase H</fullName>
        <ecNumber evidence="1">2.1.1.177</ecNumber>
    </recommendedName>
    <alternativeName>
        <fullName evidence="1">23S rRNA (pseudouridine1915-N3)-methyltransferase</fullName>
    </alternativeName>
    <alternativeName>
        <fullName evidence="1">23S rRNA m3Psi1915 methyltransferase</fullName>
    </alternativeName>
    <alternativeName>
        <fullName evidence="1">rRNA (pseudouridine-N3-)-methyltransferase RlmH</fullName>
    </alternativeName>
</protein>
<sequence length="156" mass="17520">MKLQLVAVGTKMPDWVQTGFIEYLRRFPKDMPFELAEIPAGKRGKNADIKRILEKEGELMLAAVGKNNRIVTLDIPGTPWETPQLAQQLERWKQDGRDVSLLIGGPEGLAPACKAAAEQSWSLSPLTLPHPLVRVLVAESLYRAWSITTNHPYHRE</sequence>
<organism>
    <name type="scientific">Yersinia pseudotuberculosis serotype I (strain IP32953)</name>
    <dbReference type="NCBI Taxonomy" id="273123"/>
    <lineage>
        <taxon>Bacteria</taxon>
        <taxon>Pseudomonadati</taxon>
        <taxon>Pseudomonadota</taxon>
        <taxon>Gammaproteobacteria</taxon>
        <taxon>Enterobacterales</taxon>
        <taxon>Yersiniaceae</taxon>
        <taxon>Yersinia</taxon>
    </lineage>
</organism>
<evidence type="ECO:0000255" key="1">
    <source>
        <dbReference type="HAMAP-Rule" id="MF_00658"/>
    </source>
</evidence>
<dbReference type="EC" id="2.1.1.177" evidence="1"/>
<dbReference type="EMBL" id="BX936398">
    <property type="protein sequence ID" value="CAH20338.1"/>
    <property type="molecule type" value="Genomic_DNA"/>
</dbReference>
<dbReference type="RefSeq" id="WP_002210328.1">
    <property type="nucleotide sequence ID" value="NZ_CP009712.1"/>
</dbReference>
<dbReference type="SMR" id="Q66DE8"/>
<dbReference type="GeneID" id="57976090"/>
<dbReference type="KEGG" id="ypo:BZ17_1445"/>
<dbReference type="KEGG" id="yps:YPTB1098"/>
<dbReference type="PATRIC" id="fig|273123.14.peg.1529"/>
<dbReference type="Proteomes" id="UP000001011">
    <property type="component" value="Chromosome"/>
</dbReference>
<dbReference type="GO" id="GO:0005737">
    <property type="term" value="C:cytoplasm"/>
    <property type="evidence" value="ECO:0007669"/>
    <property type="project" value="UniProtKB-SubCell"/>
</dbReference>
<dbReference type="GO" id="GO:0070038">
    <property type="term" value="F:rRNA (pseudouridine-N3-)-methyltransferase activity"/>
    <property type="evidence" value="ECO:0007669"/>
    <property type="project" value="UniProtKB-UniRule"/>
</dbReference>
<dbReference type="CDD" id="cd18081">
    <property type="entry name" value="RlmH-like"/>
    <property type="match status" value="1"/>
</dbReference>
<dbReference type="FunFam" id="3.40.1280.10:FF:000004">
    <property type="entry name" value="Ribosomal RNA large subunit methyltransferase H"/>
    <property type="match status" value="1"/>
</dbReference>
<dbReference type="Gene3D" id="3.40.1280.10">
    <property type="match status" value="1"/>
</dbReference>
<dbReference type="HAMAP" id="MF_00658">
    <property type="entry name" value="23SrRNA_methyltr_H"/>
    <property type="match status" value="1"/>
</dbReference>
<dbReference type="InterPro" id="IPR029028">
    <property type="entry name" value="Alpha/beta_knot_MTases"/>
</dbReference>
<dbReference type="InterPro" id="IPR003742">
    <property type="entry name" value="RlmH-like"/>
</dbReference>
<dbReference type="InterPro" id="IPR029026">
    <property type="entry name" value="tRNA_m1G_MTases_N"/>
</dbReference>
<dbReference type="NCBIfam" id="NF000984">
    <property type="entry name" value="PRK00103.1-1"/>
    <property type="match status" value="1"/>
</dbReference>
<dbReference type="NCBIfam" id="NF000986">
    <property type="entry name" value="PRK00103.1-4"/>
    <property type="match status" value="1"/>
</dbReference>
<dbReference type="NCBIfam" id="TIGR00246">
    <property type="entry name" value="tRNA_RlmH_YbeA"/>
    <property type="match status" value="1"/>
</dbReference>
<dbReference type="PANTHER" id="PTHR33603">
    <property type="entry name" value="METHYLTRANSFERASE"/>
    <property type="match status" value="1"/>
</dbReference>
<dbReference type="PANTHER" id="PTHR33603:SF1">
    <property type="entry name" value="RIBOSOMAL RNA LARGE SUBUNIT METHYLTRANSFERASE H"/>
    <property type="match status" value="1"/>
</dbReference>
<dbReference type="Pfam" id="PF02590">
    <property type="entry name" value="SPOUT_MTase"/>
    <property type="match status" value="1"/>
</dbReference>
<dbReference type="PIRSF" id="PIRSF004505">
    <property type="entry name" value="MT_bac"/>
    <property type="match status" value="1"/>
</dbReference>
<dbReference type="SUPFAM" id="SSF75217">
    <property type="entry name" value="alpha/beta knot"/>
    <property type="match status" value="1"/>
</dbReference>
<feature type="chain" id="PRO_0000198218" description="Ribosomal RNA large subunit methyltransferase H">
    <location>
        <begin position="1"/>
        <end position="156"/>
    </location>
</feature>
<feature type="binding site" evidence="1">
    <location>
        <position position="73"/>
    </location>
    <ligand>
        <name>S-adenosyl-L-methionine</name>
        <dbReference type="ChEBI" id="CHEBI:59789"/>
    </ligand>
</feature>
<feature type="binding site" evidence="1">
    <location>
        <position position="104"/>
    </location>
    <ligand>
        <name>S-adenosyl-L-methionine</name>
        <dbReference type="ChEBI" id="CHEBI:59789"/>
    </ligand>
</feature>
<feature type="binding site" evidence="1">
    <location>
        <begin position="123"/>
        <end position="128"/>
    </location>
    <ligand>
        <name>S-adenosyl-L-methionine</name>
        <dbReference type="ChEBI" id="CHEBI:59789"/>
    </ligand>
</feature>
<accession>Q66DE8</accession>
<gene>
    <name evidence="1" type="primary">rlmH</name>
    <name type="ordered locus">YPTB1098</name>
</gene>
<reference key="1">
    <citation type="journal article" date="2004" name="Proc. Natl. Acad. Sci. U.S.A.">
        <title>Insights into the evolution of Yersinia pestis through whole-genome comparison with Yersinia pseudotuberculosis.</title>
        <authorList>
            <person name="Chain P.S.G."/>
            <person name="Carniel E."/>
            <person name="Larimer F.W."/>
            <person name="Lamerdin J."/>
            <person name="Stoutland P.O."/>
            <person name="Regala W.M."/>
            <person name="Georgescu A.M."/>
            <person name="Vergez L.M."/>
            <person name="Land M.L."/>
            <person name="Motin V.L."/>
            <person name="Brubaker R.R."/>
            <person name="Fowler J."/>
            <person name="Hinnebusch J."/>
            <person name="Marceau M."/>
            <person name="Medigue C."/>
            <person name="Simonet M."/>
            <person name="Chenal-Francisque V."/>
            <person name="Souza B."/>
            <person name="Dacheux D."/>
            <person name="Elliott J.M."/>
            <person name="Derbise A."/>
            <person name="Hauser L.J."/>
            <person name="Garcia E."/>
        </authorList>
    </citation>
    <scope>NUCLEOTIDE SEQUENCE [LARGE SCALE GENOMIC DNA]</scope>
    <source>
        <strain>IP32953</strain>
    </source>
</reference>
<proteinExistence type="inferred from homology"/>
<name>RLMH_YERPS</name>
<comment type="function">
    <text evidence="1">Specifically methylates the pseudouridine at position 1915 (m3Psi1915) in 23S rRNA.</text>
</comment>
<comment type="catalytic activity">
    <reaction evidence="1">
        <text>pseudouridine(1915) in 23S rRNA + S-adenosyl-L-methionine = N(3)-methylpseudouridine(1915) in 23S rRNA + S-adenosyl-L-homocysteine + H(+)</text>
        <dbReference type="Rhea" id="RHEA:42752"/>
        <dbReference type="Rhea" id="RHEA-COMP:10221"/>
        <dbReference type="Rhea" id="RHEA-COMP:10222"/>
        <dbReference type="ChEBI" id="CHEBI:15378"/>
        <dbReference type="ChEBI" id="CHEBI:57856"/>
        <dbReference type="ChEBI" id="CHEBI:59789"/>
        <dbReference type="ChEBI" id="CHEBI:65314"/>
        <dbReference type="ChEBI" id="CHEBI:74486"/>
        <dbReference type="EC" id="2.1.1.177"/>
    </reaction>
</comment>
<comment type="subunit">
    <text evidence="1">Homodimer.</text>
</comment>
<comment type="subcellular location">
    <subcellularLocation>
        <location evidence="1">Cytoplasm</location>
    </subcellularLocation>
</comment>
<comment type="similarity">
    <text evidence="1">Belongs to the RNA methyltransferase RlmH family.</text>
</comment>
<keyword id="KW-0963">Cytoplasm</keyword>
<keyword id="KW-0489">Methyltransferase</keyword>
<keyword id="KW-0698">rRNA processing</keyword>
<keyword id="KW-0949">S-adenosyl-L-methionine</keyword>
<keyword id="KW-0808">Transferase</keyword>